<feature type="chain" id="PRO_0000104796" description="Large ribosomal subunit protein uL15">
    <location>
        <begin position="1"/>
        <end position="153"/>
    </location>
</feature>
<feature type="region of interest" description="Disordered" evidence="2">
    <location>
        <begin position="21"/>
        <end position="41"/>
    </location>
</feature>
<feature type="compositionally biased region" description="Gly residues" evidence="2">
    <location>
        <begin position="23"/>
        <end position="35"/>
    </location>
</feature>
<gene>
    <name evidence="1" type="primary">rplO</name>
    <name type="ordered locus">RF_0297</name>
</gene>
<proteinExistence type="inferred from homology"/>
<dbReference type="EMBL" id="CP000053">
    <property type="protein sequence ID" value="AAY61148.1"/>
    <property type="molecule type" value="Genomic_DNA"/>
</dbReference>
<dbReference type="SMR" id="Q4UMR0"/>
<dbReference type="STRING" id="315456.RF_0297"/>
<dbReference type="KEGG" id="rfe:RF_0297"/>
<dbReference type="eggNOG" id="COG0200">
    <property type="taxonomic scope" value="Bacteria"/>
</dbReference>
<dbReference type="HOGENOM" id="CLU_055188_4_0_5"/>
<dbReference type="OrthoDB" id="9810293at2"/>
<dbReference type="Proteomes" id="UP000008548">
    <property type="component" value="Chromosome"/>
</dbReference>
<dbReference type="GO" id="GO:0015934">
    <property type="term" value="C:large ribosomal subunit"/>
    <property type="evidence" value="ECO:0007669"/>
    <property type="project" value="InterPro"/>
</dbReference>
<dbReference type="GO" id="GO:0019843">
    <property type="term" value="F:rRNA binding"/>
    <property type="evidence" value="ECO:0007669"/>
    <property type="project" value="UniProtKB-UniRule"/>
</dbReference>
<dbReference type="GO" id="GO:0003735">
    <property type="term" value="F:structural constituent of ribosome"/>
    <property type="evidence" value="ECO:0007669"/>
    <property type="project" value="InterPro"/>
</dbReference>
<dbReference type="GO" id="GO:0006412">
    <property type="term" value="P:translation"/>
    <property type="evidence" value="ECO:0007669"/>
    <property type="project" value="UniProtKB-UniRule"/>
</dbReference>
<dbReference type="Gene3D" id="3.100.10.10">
    <property type="match status" value="1"/>
</dbReference>
<dbReference type="HAMAP" id="MF_01341">
    <property type="entry name" value="Ribosomal_uL15"/>
    <property type="match status" value="1"/>
</dbReference>
<dbReference type="InterPro" id="IPR030878">
    <property type="entry name" value="Ribosomal_uL15"/>
</dbReference>
<dbReference type="InterPro" id="IPR021131">
    <property type="entry name" value="Ribosomal_uL15/eL18"/>
</dbReference>
<dbReference type="InterPro" id="IPR036227">
    <property type="entry name" value="Ribosomal_uL15/eL18_sf"/>
</dbReference>
<dbReference type="InterPro" id="IPR005749">
    <property type="entry name" value="Ribosomal_uL15_bac-type"/>
</dbReference>
<dbReference type="NCBIfam" id="TIGR01071">
    <property type="entry name" value="rplO_bact"/>
    <property type="match status" value="1"/>
</dbReference>
<dbReference type="PANTHER" id="PTHR12934">
    <property type="entry name" value="50S RIBOSOMAL PROTEIN L15"/>
    <property type="match status" value="1"/>
</dbReference>
<dbReference type="PANTHER" id="PTHR12934:SF11">
    <property type="entry name" value="LARGE RIBOSOMAL SUBUNIT PROTEIN UL15M"/>
    <property type="match status" value="1"/>
</dbReference>
<dbReference type="Pfam" id="PF00828">
    <property type="entry name" value="Ribosomal_L27A"/>
    <property type="match status" value="1"/>
</dbReference>
<dbReference type="SUPFAM" id="SSF52080">
    <property type="entry name" value="Ribosomal proteins L15p and L18e"/>
    <property type="match status" value="1"/>
</dbReference>
<organism>
    <name type="scientific">Rickettsia felis (strain ATCC VR-1525 / URRWXCal2)</name>
    <name type="common">Rickettsia azadi</name>
    <dbReference type="NCBI Taxonomy" id="315456"/>
    <lineage>
        <taxon>Bacteria</taxon>
        <taxon>Pseudomonadati</taxon>
        <taxon>Pseudomonadota</taxon>
        <taxon>Alphaproteobacteria</taxon>
        <taxon>Rickettsiales</taxon>
        <taxon>Rickettsiaceae</taxon>
        <taxon>Rickettsieae</taxon>
        <taxon>Rickettsia</taxon>
        <taxon>spotted fever group</taxon>
    </lineage>
</organism>
<reference key="1">
    <citation type="journal article" date="2005" name="PLoS Biol.">
        <title>The genome sequence of Rickettsia felis identifies the first putative conjugative plasmid in an obligate intracellular parasite.</title>
        <authorList>
            <person name="Ogata H."/>
            <person name="Renesto P."/>
            <person name="Audic S."/>
            <person name="Robert C."/>
            <person name="Blanc G."/>
            <person name="Fournier P.-E."/>
            <person name="Parinello H."/>
            <person name="Claverie J.-M."/>
            <person name="Raoult D."/>
        </authorList>
    </citation>
    <scope>NUCLEOTIDE SEQUENCE [LARGE SCALE GENOMIC DNA]</scope>
    <source>
        <strain>ATCC VR-1525 / URRWXCal2</strain>
    </source>
</reference>
<name>RL15_RICFE</name>
<evidence type="ECO:0000255" key="1">
    <source>
        <dbReference type="HAMAP-Rule" id="MF_01341"/>
    </source>
</evidence>
<evidence type="ECO:0000256" key="2">
    <source>
        <dbReference type="SAM" id="MobiDB-lite"/>
    </source>
</evidence>
<evidence type="ECO:0000305" key="3"/>
<protein>
    <recommendedName>
        <fullName evidence="1">Large ribosomal subunit protein uL15</fullName>
    </recommendedName>
    <alternativeName>
        <fullName evidence="3">50S ribosomal protein L15</fullName>
    </alternativeName>
</protein>
<accession>Q4UMR0</accession>
<comment type="function">
    <text evidence="1">Binds to the 23S rRNA.</text>
</comment>
<comment type="subunit">
    <text evidence="1">Part of the 50S ribosomal subunit.</text>
</comment>
<comment type="similarity">
    <text evidence="1">Belongs to the universal ribosomal protein uL15 family.</text>
</comment>
<keyword id="KW-0687">Ribonucleoprotein</keyword>
<keyword id="KW-0689">Ribosomal protein</keyword>
<keyword id="KW-0694">RNA-binding</keyword>
<keyword id="KW-0699">rRNA-binding</keyword>
<sequence>MKLNELYNNIGAKKNKKRIARGIGSGKGKTGGRGIKGQKSRSGVAIKGFEGGQTPMIKRLPKRGFNCISTKKYNIINIYNIEEALADGRLSAADTITKEKLVEVGVVNNKNNKKLVKLLSICSDDFASPLSLKLDAYSSKAKDLIEKAGGKLL</sequence>